<proteinExistence type="inferred from homology"/>
<accession>Q65S65</accession>
<feature type="chain" id="PRO_0000369725" description="Ribosomal RNA small subunit methyltransferase C">
    <location>
        <begin position="1"/>
        <end position="333"/>
    </location>
</feature>
<name>RSMC_MANSM</name>
<protein>
    <recommendedName>
        <fullName evidence="1">Ribosomal RNA small subunit methyltransferase C</fullName>
        <ecNumber evidence="1">2.1.1.172</ecNumber>
    </recommendedName>
    <alternativeName>
        <fullName evidence="1">16S rRNA m2G1207 methyltransferase</fullName>
    </alternativeName>
    <alternativeName>
        <fullName evidence="1">rRNA (guanine-N(2)-)-methyltransferase RsmC</fullName>
    </alternativeName>
</protein>
<comment type="function">
    <text evidence="1">Specifically methylates the guanine in position 1207 of 16S rRNA in the 30S particle.</text>
</comment>
<comment type="catalytic activity">
    <reaction evidence="1">
        <text>guanosine(1207) in 16S rRNA + S-adenosyl-L-methionine = N(2)-methylguanosine(1207) in 16S rRNA + S-adenosyl-L-homocysteine + H(+)</text>
        <dbReference type="Rhea" id="RHEA:42736"/>
        <dbReference type="Rhea" id="RHEA-COMP:10213"/>
        <dbReference type="Rhea" id="RHEA-COMP:10214"/>
        <dbReference type="ChEBI" id="CHEBI:15378"/>
        <dbReference type="ChEBI" id="CHEBI:57856"/>
        <dbReference type="ChEBI" id="CHEBI:59789"/>
        <dbReference type="ChEBI" id="CHEBI:74269"/>
        <dbReference type="ChEBI" id="CHEBI:74481"/>
        <dbReference type="EC" id="2.1.1.172"/>
    </reaction>
</comment>
<comment type="subunit">
    <text evidence="1">Monomer.</text>
</comment>
<comment type="subcellular location">
    <subcellularLocation>
        <location evidence="1">Cytoplasm</location>
    </subcellularLocation>
</comment>
<comment type="similarity">
    <text evidence="1">Belongs to the methyltransferase superfamily. RsmC family.</text>
</comment>
<evidence type="ECO:0000255" key="1">
    <source>
        <dbReference type="HAMAP-Rule" id="MF_01862"/>
    </source>
</evidence>
<keyword id="KW-0963">Cytoplasm</keyword>
<keyword id="KW-0489">Methyltransferase</keyword>
<keyword id="KW-0698">rRNA processing</keyword>
<keyword id="KW-0949">S-adenosyl-L-methionine</keyword>
<keyword id="KW-0808">Transferase</keyword>
<reference key="1">
    <citation type="journal article" date="2004" name="Nat. Biotechnol.">
        <title>The genome sequence of the capnophilic rumen bacterium Mannheimia succiniciproducens.</title>
        <authorList>
            <person name="Hong S.H."/>
            <person name="Kim J.S."/>
            <person name="Lee S.Y."/>
            <person name="In Y.H."/>
            <person name="Choi S.S."/>
            <person name="Rih J.-K."/>
            <person name="Kim C.H."/>
            <person name="Jeong H."/>
            <person name="Hur C.G."/>
            <person name="Kim J.J."/>
        </authorList>
    </citation>
    <scope>NUCLEOTIDE SEQUENCE [LARGE SCALE GENOMIC DNA]</scope>
    <source>
        <strain>KCTC 0769BP / MBEL55E</strain>
    </source>
</reference>
<sequence length="333" mass="37124">MISLESQVLERHLPLFADKSVLLAGGVNDDFPQKIQSQCRSVKIWSWYFDYVNQIQGKSAVDFSVIFTGRADLIVYYWTKNKQEVQFQLMQLLANAPVGQEVLIIGENRSGVRSAEKMLAHFGDIGKIDSARRCGLYHFTLQKQPNFELENFWKTYRSPQLGELIVYSLPGVFSANELDVGTQLLLSTVKDNIRGDVLDLGCGAGVIGSMIKLKNPPAKVTMTDIHAMALASAERTLLENKLSGQVLASDVFSHVEGKFDLIISNPPFHDGIDTAYRAVRELISNAKWHLVPGGELRIVANAFLPYPDLLDEYFGGHKVLAQTNKFKVYSVIG</sequence>
<organism>
    <name type="scientific">Mannheimia succiniciproducens (strain KCTC 0769BP / MBEL55E)</name>
    <dbReference type="NCBI Taxonomy" id="221988"/>
    <lineage>
        <taxon>Bacteria</taxon>
        <taxon>Pseudomonadati</taxon>
        <taxon>Pseudomonadota</taxon>
        <taxon>Gammaproteobacteria</taxon>
        <taxon>Pasteurellales</taxon>
        <taxon>Pasteurellaceae</taxon>
        <taxon>Basfia</taxon>
    </lineage>
</organism>
<dbReference type="EC" id="2.1.1.172" evidence="1"/>
<dbReference type="EMBL" id="AE016827">
    <property type="protein sequence ID" value="AAU38195.1"/>
    <property type="molecule type" value="Genomic_DNA"/>
</dbReference>
<dbReference type="RefSeq" id="WP_011200759.1">
    <property type="nucleotide sequence ID" value="NC_006300.1"/>
</dbReference>
<dbReference type="SMR" id="Q65S65"/>
<dbReference type="STRING" id="221988.MS1588"/>
<dbReference type="KEGG" id="msu:MS1588"/>
<dbReference type="eggNOG" id="COG2813">
    <property type="taxonomic scope" value="Bacteria"/>
</dbReference>
<dbReference type="HOGENOM" id="CLU_049581_0_1_6"/>
<dbReference type="OrthoDB" id="9816072at2"/>
<dbReference type="Proteomes" id="UP000000607">
    <property type="component" value="Chromosome"/>
</dbReference>
<dbReference type="GO" id="GO:0005737">
    <property type="term" value="C:cytoplasm"/>
    <property type="evidence" value="ECO:0007669"/>
    <property type="project" value="UniProtKB-SubCell"/>
</dbReference>
<dbReference type="GO" id="GO:0052914">
    <property type="term" value="F:16S rRNA (guanine(1207)-N(2))-methyltransferase activity"/>
    <property type="evidence" value="ECO:0007669"/>
    <property type="project" value="UniProtKB-EC"/>
</dbReference>
<dbReference type="GO" id="GO:0003676">
    <property type="term" value="F:nucleic acid binding"/>
    <property type="evidence" value="ECO:0007669"/>
    <property type="project" value="InterPro"/>
</dbReference>
<dbReference type="CDD" id="cd02440">
    <property type="entry name" value="AdoMet_MTases"/>
    <property type="match status" value="1"/>
</dbReference>
<dbReference type="Gene3D" id="3.40.50.150">
    <property type="entry name" value="Vaccinia Virus protein VP39"/>
    <property type="match status" value="2"/>
</dbReference>
<dbReference type="HAMAP" id="MF_01862">
    <property type="entry name" value="16SrRNA_methyltr_C"/>
    <property type="match status" value="1"/>
</dbReference>
<dbReference type="InterPro" id="IPR002052">
    <property type="entry name" value="DNA_methylase_N6_adenine_CS"/>
</dbReference>
<dbReference type="InterPro" id="IPR013675">
    <property type="entry name" value="Mtase_sm_N"/>
</dbReference>
<dbReference type="InterPro" id="IPR023543">
    <property type="entry name" value="rRNA_ssu_MeTfrase_C"/>
</dbReference>
<dbReference type="InterPro" id="IPR046977">
    <property type="entry name" value="RsmC/RlmG"/>
</dbReference>
<dbReference type="InterPro" id="IPR029063">
    <property type="entry name" value="SAM-dependent_MTases_sf"/>
</dbReference>
<dbReference type="InterPro" id="IPR007848">
    <property type="entry name" value="Small_mtfrase_dom"/>
</dbReference>
<dbReference type="NCBIfam" id="NF007023">
    <property type="entry name" value="PRK09489.1"/>
    <property type="match status" value="1"/>
</dbReference>
<dbReference type="PANTHER" id="PTHR47816">
    <property type="entry name" value="RIBOSOMAL RNA SMALL SUBUNIT METHYLTRANSFERASE C"/>
    <property type="match status" value="1"/>
</dbReference>
<dbReference type="PANTHER" id="PTHR47816:SF4">
    <property type="entry name" value="RIBOSOMAL RNA SMALL SUBUNIT METHYLTRANSFERASE C"/>
    <property type="match status" value="1"/>
</dbReference>
<dbReference type="Pfam" id="PF05175">
    <property type="entry name" value="MTS"/>
    <property type="match status" value="1"/>
</dbReference>
<dbReference type="Pfam" id="PF08468">
    <property type="entry name" value="MTS_N"/>
    <property type="match status" value="1"/>
</dbReference>
<dbReference type="SUPFAM" id="SSF53335">
    <property type="entry name" value="S-adenosyl-L-methionine-dependent methyltransferases"/>
    <property type="match status" value="1"/>
</dbReference>
<gene>
    <name evidence="1" type="primary">rsmC</name>
    <name type="ordered locus">MS1588</name>
</gene>